<reference key="1">
    <citation type="journal article" date="1994" name="Plant Cell">
        <title>A superfamily of S locus-related sequences in Arabidopsis: diverse structures and expression patterns.</title>
        <authorList>
            <person name="Dwyer K.G."/>
            <person name="Kandasamy M.K."/>
            <person name="Mahosky D.I."/>
            <person name="Acciai J."/>
            <person name="Kudish B.I."/>
            <person name="Miller J.E."/>
            <person name="Nasrallah M.E."/>
            <person name="Nasrallah J.B."/>
        </authorList>
    </citation>
    <scope>NUCLEOTIDE SEQUENCE [GENOMIC DNA]</scope>
    <scope>TISSUE SPECIFICITY</scope>
    <source>
        <strain>cv. C24</strain>
    </source>
</reference>
<reference key="2">
    <citation type="journal article" date="2007" name="Plant Cell">
        <title>S locus genes and the evolution of self-fertility in Arabidopsis thaliana.</title>
        <authorList>
            <person name="Sherman-Broyles S."/>
            <person name="Boggs N."/>
            <person name="Farkas A."/>
            <person name="Liu P."/>
            <person name="Vrebalov J."/>
            <person name="Nasrallah M.E."/>
            <person name="Nasrallah J.B."/>
        </authorList>
    </citation>
    <scope>NUCLEOTIDE SEQUENCE [GENOMIC DNA]</scope>
    <scope>VARIANTS ASN-102; VAL-256; THR-270; MET-366; LEU-375; LYS-384 AND ILE-405</scope>
    <source>
        <strain>cv. C24</strain>
    </source>
</reference>
<reference key="3">
    <citation type="journal article" date="2007" name="Science">
        <title>The evolution of selfing in Arabidopsis thaliana.</title>
        <authorList>
            <person name="Tang C."/>
            <person name="Toomajian C."/>
            <person name="Sherman-Broyles S."/>
            <person name="Plagnol V."/>
            <person name="Guo Y.-L."/>
            <person name="Hu T.T."/>
            <person name="Clark R.M."/>
            <person name="Nasrallah J.B."/>
            <person name="Weigel D."/>
            <person name="Nordborg M."/>
        </authorList>
    </citation>
    <scope>NUCLEOTIDE SEQUENCE [GENOMIC DNA]</scope>
    <scope>VARIANT VAL-256</scope>
    <source>
        <strain>cv. Cvi-0</strain>
    </source>
</reference>
<reference key="4">
    <citation type="journal article" date="1999" name="Nature">
        <title>Sequence and analysis of chromosome 4 of the plant Arabidopsis thaliana.</title>
        <authorList>
            <person name="Mayer K.F.X."/>
            <person name="Schueller C."/>
            <person name="Wambutt R."/>
            <person name="Murphy G."/>
            <person name="Volckaert G."/>
            <person name="Pohl T."/>
            <person name="Duesterhoeft A."/>
            <person name="Stiekema W."/>
            <person name="Entian K.-D."/>
            <person name="Terryn N."/>
            <person name="Harris B."/>
            <person name="Ansorge W."/>
            <person name="Brandt P."/>
            <person name="Grivell L.A."/>
            <person name="Rieger M."/>
            <person name="Weichselgartner M."/>
            <person name="de Simone V."/>
            <person name="Obermaier B."/>
            <person name="Mache R."/>
            <person name="Mueller M."/>
            <person name="Kreis M."/>
            <person name="Delseny M."/>
            <person name="Puigdomenech P."/>
            <person name="Watson M."/>
            <person name="Schmidtheini T."/>
            <person name="Reichert B."/>
            <person name="Portetelle D."/>
            <person name="Perez-Alonso M."/>
            <person name="Boutry M."/>
            <person name="Bancroft I."/>
            <person name="Vos P."/>
            <person name="Hoheisel J."/>
            <person name="Zimmermann W."/>
            <person name="Wedler H."/>
            <person name="Ridley P."/>
            <person name="Langham S.-A."/>
            <person name="McCullagh B."/>
            <person name="Bilham L."/>
            <person name="Robben J."/>
            <person name="van der Schueren J."/>
            <person name="Grymonprez B."/>
            <person name="Chuang Y.-J."/>
            <person name="Vandenbussche F."/>
            <person name="Braeken M."/>
            <person name="Weltjens I."/>
            <person name="Voet M."/>
            <person name="Bastiaens I."/>
            <person name="Aert R."/>
            <person name="Defoor E."/>
            <person name="Weitzenegger T."/>
            <person name="Bothe G."/>
            <person name="Ramsperger U."/>
            <person name="Hilbert H."/>
            <person name="Braun M."/>
            <person name="Holzer E."/>
            <person name="Brandt A."/>
            <person name="Peters S."/>
            <person name="van Staveren M."/>
            <person name="Dirkse W."/>
            <person name="Mooijman P."/>
            <person name="Klein Lankhorst R."/>
            <person name="Rose M."/>
            <person name="Hauf J."/>
            <person name="Koetter P."/>
            <person name="Berneiser S."/>
            <person name="Hempel S."/>
            <person name="Feldpausch M."/>
            <person name="Lamberth S."/>
            <person name="Van den Daele H."/>
            <person name="De Keyser A."/>
            <person name="Buysshaert C."/>
            <person name="Gielen J."/>
            <person name="Villarroel R."/>
            <person name="De Clercq R."/>
            <person name="van Montagu M."/>
            <person name="Rogers J."/>
            <person name="Cronin A."/>
            <person name="Quail M.A."/>
            <person name="Bray-Allen S."/>
            <person name="Clark L."/>
            <person name="Doggett J."/>
            <person name="Hall S."/>
            <person name="Kay M."/>
            <person name="Lennard N."/>
            <person name="McLay K."/>
            <person name="Mayes R."/>
            <person name="Pettett A."/>
            <person name="Rajandream M.A."/>
            <person name="Lyne M."/>
            <person name="Benes V."/>
            <person name="Rechmann S."/>
            <person name="Borkova D."/>
            <person name="Bloecker H."/>
            <person name="Scharfe M."/>
            <person name="Grimm M."/>
            <person name="Loehnert T.-H."/>
            <person name="Dose S."/>
            <person name="de Haan M."/>
            <person name="Maarse A.C."/>
            <person name="Schaefer M."/>
            <person name="Mueller-Auer S."/>
            <person name="Gabel C."/>
            <person name="Fuchs M."/>
            <person name="Fartmann B."/>
            <person name="Granderath K."/>
            <person name="Dauner D."/>
            <person name="Herzl A."/>
            <person name="Neumann S."/>
            <person name="Argiriou A."/>
            <person name="Vitale D."/>
            <person name="Liguori R."/>
            <person name="Piravandi E."/>
            <person name="Massenet O."/>
            <person name="Quigley F."/>
            <person name="Clabauld G."/>
            <person name="Muendlein A."/>
            <person name="Felber R."/>
            <person name="Schnabl S."/>
            <person name="Hiller R."/>
            <person name="Schmidt W."/>
            <person name="Lecharny A."/>
            <person name="Aubourg S."/>
            <person name="Chefdor F."/>
            <person name="Cooke R."/>
            <person name="Berger C."/>
            <person name="Monfort A."/>
            <person name="Casacuberta E."/>
            <person name="Gibbons T."/>
            <person name="Weber N."/>
            <person name="Vandenbol M."/>
            <person name="Bargues M."/>
            <person name="Terol J."/>
            <person name="Torres A."/>
            <person name="Perez-Perez A."/>
            <person name="Purnelle B."/>
            <person name="Bent E."/>
            <person name="Johnson S."/>
            <person name="Tacon D."/>
            <person name="Jesse T."/>
            <person name="Heijnen L."/>
            <person name="Schwarz S."/>
            <person name="Scholler P."/>
            <person name="Heber S."/>
            <person name="Francs P."/>
            <person name="Bielke C."/>
            <person name="Frishman D."/>
            <person name="Haase D."/>
            <person name="Lemcke K."/>
            <person name="Mewes H.-W."/>
            <person name="Stocker S."/>
            <person name="Zaccaria P."/>
            <person name="Bevan M."/>
            <person name="Wilson R.K."/>
            <person name="de la Bastide M."/>
            <person name="Habermann K."/>
            <person name="Parnell L."/>
            <person name="Dedhia N."/>
            <person name="Gnoj L."/>
            <person name="Schutz K."/>
            <person name="Huang E."/>
            <person name="Spiegel L."/>
            <person name="Sekhon M."/>
            <person name="Murray J."/>
            <person name="Sheet P."/>
            <person name="Cordes M."/>
            <person name="Abu-Threideh J."/>
            <person name="Stoneking T."/>
            <person name="Kalicki J."/>
            <person name="Graves T."/>
            <person name="Harmon G."/>
            <person name="Edwards J."/>
            <person name="Latreille P."/>
            <person name="Courtney L."/>
            <person name="Cloud J."/>
            <person name="Abbott A."/>
            <person name="Scott K."/>
            <person name="Johnson D."/>
            <person name="Minx P."/>
            <person name="Bentley D."/>
            <person name="Fulton B."/>
            <person name="Miller N."/>
            <person name="Greco T."/>
            <person name="Kemp K."/>
            <person name="Kramer J."/>
            <person name="Fulton L."/>
            <person name="Mardis E."/>
            <person name="Dante M."/>
            <person name="Pepin K."/>
            <person name="Hillier L.W."/>
            <person name="Nelson J."/>
            <person name="Spieth J."/>
            <person name="Ryan E."/>
            <person name="Andrews S."/>
            <person name="Geisel C."/>
            <person name="Layman D."/>
            <person name="Du H."/>
            <person name="Ali J."/>
            <person name="Berghoff A."/>
            <person name="Jones K."/>
            <person name="Drone K."/>
            <person name="Cotton M."/>
            <person name="Joshu C."/>
            <person name="Antonoiu B."/>
            <person name="Zidanic M."/>
            <person name="Strong C."/>
            <person name="Sun H."/>
            <person name="Lamar B."/>
            <person name="Yordan C."/>
            <person name="Ma P."/>
            <person name="Zhong J."/>
            <person name="Preston R."/>
            <person name="Vil D."/>
            <person name="Shekher M."/>
            <person name="Matero A."/>
            <person name="Shah R."/>
            <person name="Swaby I.K."/>
            <person name="O'Shaughnessy A."/>
            <person name="Rodriguez M."/>
            <person name="Hoffman J."/>
            <person name="Till S."/>
            <person name="Granat S."/>
            <person name="Shohdy N."/>
            <person name="Hasegawa A."/>
            <person name="Hameed A."/>
            <person name="Lodhi M."/>
            <person name="Johnson A."/>
            <person name="Chen E."/>
            <person name="Marra M.A."/>
            <person name="Martienssen R."/>
            <person name="McCombie W.R."/>
        </authorList>
    </citation>
    <scope>NUCLEOTIDE SEQUENCE [LARGE SCALE GENOMIC DNA]</scope>
    <source>
        <strain>cv. Columbia</strain>
    </source>
</reference>
<reference key="5">
    <citation type="journal article" date="2017" name="Plant J.">
        <title>Araport11: a complete reannotation of the Arabidopsis thaliana reference genome.</title>
        <authorList>
            <person name="Cheng C.Y."/>
            <person name="Krishnakumar V."/>
            <person name="Chan A.P."/>
            <person name="Thibaud-Nissen F."/>
            <person name="Schobel S."/>
            <person name="Town C.D."/>
        </authorList>
    </citation>
    <scope>GENOME REANNOTATION</scope>
    <source>
        <strain>cv. Columbia</strain>
    </source>
</reference>
<reference key="6">
    <citation type="journal article" date="2002" name="Science">
        <title>Functional annotation of a full-length Arabidopsis cDNA collection.</title>
        <authorList>
            <person name="Seki M."/>
            <person name="Narusaka M."/>
            <person name="Kamiya A."/>
            <person name="Ishida J."/>
            <person name="Satou M."/>
            <person name="Sakurai T."/>
            <person name="Nakajima M."/>
            <person name="Enju A."/>
            <person name="Akiyama K."/>
            <person name="Oono Y."/>
            <person name="Muramatsu M."/>
            <person name="Hayashizaki Y."/>
            <person name="Kawai J."/>
            <person name="Carninci P."/>
            <person name="Itoh M."/>
            <person name="Ishii Y."/>
            <person name="Arakawa T."/>
            <person name="Shibata K."/>
            <person name="Shinagawa A."/>
            <person name="Shinozaki K."/>
        </authorList>
    </citation>
    <scope>NUCLEOTIDE SEQUENCE [LARGE SCALE MRNA]</scope>
    <source>
        <strain>cv. Columbia</strain>
    </source>
</reference>
<reference key="7">
    <citation type="journal article" date="2003" name="Science">
        <title>Empirical analysis of transcriptional activity in the Arabidopsis genome.</title>
        <authorList>
            <person name="Yamada K."/>
            <person name="Lim J."/>
            <person name="Dale J.M."/>
            <person name="Chen H."/>
            <person name="Shinn P."/>
            <person name="Palm C.J."/>
            <person name="Southwick A.M."/>
            <person name="Wu H.C."/>
            <person name="Kim C.J."/>
            <person name="Nguyen M."/>
            <person name="Pham P.K."/>
            <person name="Cheuk R.F."/>
            <person name="Karlin-Newmann G."/>
            <person name="Liu S.X."/>
            <person name="Lam B."/>
            <person name="Sakano H."/>
            <person name="Wu T."/>
            <person name="Yu G."/>
            <person name="Miranda M."/>
            <person name="Quach H.L."/>
            <person name="Tripp M."/>
            <person name="Chang C.H."/>
            <person name="Lee J.M."/>
            <person name="Toriumi M.J."/>
            <person name="Chan M.M."/>
            <person name="Tang C.C."/>
            <person name="Onodera C.S."/>
            <person name="Deng J.M."/>
            <person name="Akiyama K."/>
            <person name="Ansari Y."/>
            <person name="Arakawa T."/>
            <person name="Banh J."/>
            <person name="Banno F."/>
            <person name="Bowser L."/>
            <person name="Brooks S.Y."/>
            <person name="Carninci P."/>
            <person name="Chao Q."/>
            <person name="Choy N."/>
            <person name="Enju A."/>
            <person name="Goldsmith A.D."/>
            <person name="Gurjal M."/>
            <person name="Hansen N.F."/>
            <person name="Hayashizaki Y."/>
            <person name="Johnson-Hopson C."/>
            <person name="Hsuan V.W."/>
            <person name="Iida K."/>
            <person name="Karnes M."/>
            <person name="Khan S."/>
            <person name="Koesema E."/>
            <person name="Ishida J."/>
            <person name="Jiang P.X."/>
            <person name="Jones T."/>
            <person name="Kawai J."/>
            <person name="Kamiya A."/>
            <person name="Meyers C."/>
            <person name="Nakajima M."/>
            <person name="Narusaka M."/>
            <person name="Seki M."/>
            <person name="Sakurai T."/>
            <person name="Satou M."/>
            <person name="Tamse R."/>
            <person name="Vaysberg M."/>
            <person name="Wallender E.K."/>
            <person name="Wong C."/>
            <person name="Yamamura Y."/>
            <person name="Yuan S."/>
            <person name="Shinozaki K."/>
            <person name="Davis R.W."/>
            <person name="Theologis A."/>
            <person name="Ecker J.R."/>
        </authorList>
    </citation>
    <scope>NUCLEOTIDE SEQUENCE [LARGE SCALE MRNA]</scope>
    <source>
        <strain>cv. Columbia</strain>
    </source>
</reference>
<reference key="8">
    <citation type="journal article" date="2010" name="Nature">
        <title>Evolution of self-compatibility in Arabidopsis by a mutation in the male specificity gene.</title>
        <authorList>
            <person name="Tsuchimatsu T."/>
            <person name="Suwabe K."/>
            <person name="Shimizu-Inatsugi R."/>
            <person name="Isokawa S."/>
            <person name="Pavlidis P."/>
            <person name="Stadler T."/>
            <person name="Suzuki G."/>
            <person name="Takayama S."/>
            <person name="Watanabe M."/>
            <person name="Shimizu K.K."/>
        </authorList>
    </citation>
    <scope>NUCLEOTIDE SEQUENCE [GENOMIC DNA] OF 1-432</scope>
    <scope>VARIANTS THR-34; ILE-45; ASN-63; THR-74; ASN-102; ARG-150; GLY-173; ILE-240; VAL-256; 256-ILE-THR-257 DELINS VAL-SER; 256-ILE--SER-259 DELINS VAL-THR-LYS-ARG; THR-270; ILE-304; THR-346; CYS-361; ARG-366; MET-366; LEU-375; LYS-384; SER-386 AND ILE-405</scope>
    <source>
        <strain>cv. Ag-0</strain>
        <strain>cv. An-1</strain>
        <strain>cv. Bay-0</strain>
        <strain>cv. Bil-5</strain>
        <strain>cv. Bil-7</strain>
        <strain>cv. Bor-1</strain>
        <strain>cv. Bor-4</strain>
        <strain>cv. Br-0</strain>
        <strain>cv. Bur-0</strain>
        <strain>cv. C24</strain>
        <strain>cv. CIBC-17</strain>
        <strain>cv. CIBC-5</strain>
        <strain>cv. Ct-1</strain>
        <strain>cv. Ed-1</strain>
        <strain>cv. Ed-2</strain>
        <strain>cv. Edi-0</strain>
        <strain>cv. Ei-2</strain>
        <strain>cv. Est-1</strain>
        <strain>cv. Fab-2</strain>
        <strain>cv. Fab-4</strain>
        <strain>cv. Fei-0</strain>
        <strain>cv. Ga-0</strain>
        <strain>cv. Ge-0</strain>
        <strain>cv. Goettingen-22</strain>
        <strain>cv. Goettingen-7</strain>
        <strain>cv. Gy-0</strain>
        <strain>cv. HR-10</strain>
        <strain>cv. HR-5</strain>
        <strain>cv. Ler-1</strain>
        <strain>cv. Ll-0</strain>
        <strain>cv. Lov-1</strain>
        <strain>cv. Lov-5</strain>
        <strain>cv. Lp2-2</strain>
        <strain>cv. Lp2-6</strain>
        <strain>cv. Lz-0</strain>
        <strain>cv. Mr-0</strain>
        <strain>cv. Mrk-0</strain>
        <strain>cv. Ms-0</strain>
        <strain>cv. Mt-0</strain>
        <strain>cv. Mz-0</strain>
        <strain>cv. N13 Konchezero</strain>
        <strain>cv. Nd-1</strain>
        <strain>cv. NFA-10</strain>
        <strain>cv. NFA-8</strain>
        <strain>cv. Nok-3</strain>
        <strain>cv. Omo2-1</strain>
        <strain>cv. Omo2-3</strain>
        <strain>cv. Oy-0</strain>
        <strain>cv. Pu2-23</strain>
        <strain>cv. Pu2-7</strain>
        <strain>cv. Ra-0</strain>
        <strain>cv. REN-11</strain>
        <strain>cv. Se-0</strain>
        <strain>cv. Spr1-2</strain>
        <strain>cv. Spr1-6</strain>
        <strain>cv. Sq-1</strain>
        <strain>cv. Sq-8</strain>
        <strain>cv. Tamm-2</strain>
        <strain>cv. Tamm-27</strain>
        <strain>cv. Ts-1</strain>
        <strain>cv. Ts-5</strain>
        <strain>cv. Ull2-3</strain>
        <strain>cv. Ull2-5</strain>
        <strain>cv. Uod-1</strain>
        <strain>cv. Uod-7</strain>
        <strain>cv. Var2-1</strain>
        <strain>cv. Var2-6</strain>
        <strain>cv. Wa-1</strain>
        <strain>cv. Wassilewskija</strain>
        <strain>cv. Wassilewskija-2</strain>
        <strain>cv. Wei-0</strain>
        <strain>cv. Wt-5</strain>
        <strain>cv. Zdr-1</strain>
        <strain>cv. Zdr-6</strain>
    </source>
</reference>
<reference key="9">
    <citation type="journal article" date="2002" name="Gene">
        <title>Comparison of the expression patterns of two small gene families of S gene family receptor kinase genes during the defence response in Brassica oleracea and Arabidopsis thaliana.</title>
        <authorList>
            <person name="Pastuglia M."/>
            <person name="Swarup R."/>
            <person name="Rocher A."/>
            <person name="Saindrenan P."/>
            <person name="Roby D."/>
            <person name="Dumas C."/>
            <person name="Cock J.M."/>
        </authorList>
    </citation>
    <scope>INDUCTION BY WOUNDING AND XANTHOMONAS CAMPESTRIS</scope>
</reference>
<reference key="10">
    <citation type="journal article" date="2003" name="Mol. Cell. Proteomics">
        <title>Large-scale analysis of in vivo phosphorylated membrane proteins by immobilized metal ion affinity chromatography and mass spectrometry.</title>
        <authorList>
            <person name="Nuehse T.S."/>
            <person name="Stensballe A."/>
            <person name="Jensen O.N."/>
            <person name="Peck S.C."/>
        </authorList>
    </citation>
    <scope>SUBCELLULAR LOCATION</scope>
    <source>
        <strain>cv. La-0</strain>
    </source>
</reference>
<reference key="11">
    <citation type="journal article" date="2008" name="Plant Physiol.">
        <title>Interactions between the S-domain receptor kinases and AtPUB-ARM E3 ubiquitin ligases suggest a conserved signaling pathway in Arabidopsis.</title>
        <authorList>
            <person name="Samuel M.A."/>
            <person name="Mudgil Y."/>
            <person name="Salt J.N."/>
            <person name="Delmas F."/>
            <person name="Ramachandran S."/>
            <person name="Chilelli A."/>
            <person name="Goring D.R."/>
        </authorList>
    </citation>
    <scope>GENE FAMILY</scope>
    <scope>NOMENCLATURE</scope>
    <scope>INTERACTION WITH PUB9; PUB13; PUB14 AND PUB38</scope>
</reference>
<name>SD18_ARATH</name>
<gene>
    <name type="primary">SD18</name>
    <name type="synonym">ARK3</name>
    <name type="ordered locus">At4g21380</name>
    <name type="ORF">T6K22.110</name>
</gene>
<proteinExistence type="evidence at protein level"/>
<comment type="function">
    <text evidence="1">Involved in the regulation of cellular expansion and differentiation.</text>
</comment>
<comment type="catalytic activity">
    <reaction>
        <text>L-seryl-[protein] + ATP = O-phospho-L-seryl-[protein] + ADP + H(+)</text>
        <dbReference type="Rhea" id="RHEA:17989"/>
        <dbReference type="Rhea" id="RHEA-COMP:9863"/>
        <dbReference type="Rhea" id="RHEA-COMP:11604"/>
        <dbReference type="ChEBI" id="CHEBI:15378"/>
        <dbReference type="ChEBI" id="CHEBI:29999"/>
        <dbReference type="ChEBI" id="CHEBI:30616"/>
        <dbReference type="ChEBI" id="CHEBI:83421"/>
        <dbReference type="ChEBI" id="CHEBI:456216"/>
        <dbReference type="EC" id="2.7.11.1"/>
    </reaction>
</comment>
<comment type="catalytic activity">
    <reaction>
        <text>L-threonyl-[protein] + ATP = O-phospho-L-threonyl-[protein] + ADP + H(+)</text>
        <dbReference type="Rhea" id="RHEA:46608"/>
        <dbReference type="Rhea" id="RHEA-COMP:11060"/>
        <dbReference type="Rhea" id="RHEA-COMP:11605"/>
        <dbReference type="ChEBI" id="CHEBI:15378"/>
        <dbReference type="ChEBI" id="CHEBI:30013"/>
        <dbReference type="ChEBI" id="CHEBI:30616"/>
        <dbReference type="ChEBI" id="CHEBI:61977"/>
        <dbReference type="ChEBI" id="CHEBI:456216"/>
        <dbReference type="EC" id="2.7.11.1"/>
    </reaction>
</comment>
<comment type="subunit">
    <text evidence="11">Interacts with PUB9, PUB13, PUB14 and PUB38.</text>
</comment>
<comment type="subcellular location">
    <subcellularLocation>
        <location evidence="8">Cell membrane</location>
        <topology evidence="8">Single-pass type I membrane protein</topology>
    </subcellularLocation>
</comment>
<comment type="tissue specificity">
    <text evidence="13">Expressed in the root-hypocotyl transition zone, at the base of lateral roots, axillary buds and pedicels.</text>
</comment>
<comment type="induction">
    <text evidence="7">By wounding and Xanthomonas campestris pv. campestris.</text>
</comment>
<comment type="similarity">
    <text evidence="4">Belongs to the protein kinase superfamily. Ser/Thr protein kinase family.</text>
</comment>
<dbReference type="EC" id="2.7.11.1"/>
<dbReference type="EMBL" id="EF182720">
    <property type="protein sequence ID" value="ABN05291.1"/>
    <property type="molecule type" value="Genomic_DNA"/>
</dbReference>
<dbReference type="EMBL" id="EF637083">
    <property type="protein sequence ID" value="ABV21214.1"/>
    <property type="molecule type" value="Genomic_DNA"/>
</dbReference>
<dbReference type="EMBL" id="AL031187">
    <property type="protein sequence ID" value="CAA20203.1"/>
    <property type="molecule type" value="Genomic_DNA"/>
</dbReference>
<dbReference type="EMBL" id="AL161555">
    <property type="protein sequence ID" value="CAB81245.1"/>
    <property type="molecule type" value="Genomic_DNA"/>
</dbReference>
<dbReference type="EMBL" id="CP002687">
    <property type="protein sequence ID" value="AEE84446.1"/>
    <property type="molecule type" value="Genomic_DNA"/>
</dbReference>
<dbReference type="EMBL" id="AK118895">
    <property type="protein sequence ID" value="BAC43479.1"/>
    <property type="molecule type" value="mRNA"/>
</dbReference>
<dbReference type="EMBL" id="BT006032">
    <property type="protein sequence ID" value="AAP04019.1"/>
    <property type="molecule type" value="mRNA"/>
</dbReference>
<dbReference type="EMBL" id="GU723792">
    <property type="protein sequence ID" value="ADG01655.1"/>
    <property type="molecule type" value="Genomic_DNA"/>
</dbReference>
<dbReference type="EMBL" id="GU723793">
    <property type="protein sequence ID" value="ADG01656.1"/>
    <property type="molecule type" value="Genomic_DNA"/>
</dbReference>
<dbReference type="EMBL" id="GU723794">
    <property type="protein sequence ID" value="ADG01657.1"/>
    <property type="molecule type" value="Genomic_DNA"/>
</dbReference>
<dbReference type="EMBL" id="GU723795">
    <property type="protein sequence ID" value="ADG01658.1"/>
    <property type="molecule type" value="Genomic_DNA"/>
</dbReference>
<dbReference type="EMBL" id="GU723796">
    <property type="protein sequence ID" value="ADG01659.1"/>
    <property type="molecule type" value="Genomic_DNA"/>
</dbReference>
<dbReference type="EMBL" id="GU723797">
    <property type="protein sequence ID" value="ADG01660.1"/>
    <property type="molecule type" value="Genomic_DNA"/>
</dbReference>
<dbReference type="EMBL" id="GU723798">
    <property type="protein sequence ID" value="ADG01661.1"/>
    <property type="molecule type" value="Genomic_DNA"/>
</dbReference>
<dbReference type="EMBL" id="GU723799">
    <property type="protein sequence ID" value="ADG01662.1"/>
    <property type="molecule type" value="Genomic_DNA"/>
</dbReference>
<dbReference type="EMBL" id="GU723800">
    <property type="protein sequence ID" value="ADG01663.1"/>
    <property type="molecule type" value="Genomic_DNA"/>
</dbReference>
<dbReference type="EMBL" id="GU723801">
    <property type="protein sequence ID" value="ADG01664.1"/>
    <property type="molecule type" value="Genomic_DNA"/>
</dbReference>
<dbReference type="EMBL" id="GU723802">
    <property type="protein sequence ID" value="ADG01665.1"/>
    <property type="molecule type" value="Genomic_DNA"/>
</dbReference>
<dbReference type="EMBL" id="GU723803">
    <property type="protein sequence ID" value="ADG01666.1"/>
    <property type="molecule type" value="Genomic_DNA"/>
</dbReference>
<dbReference type="EMBL" id="GU723804">
    <property type="protein sequence ID" value="ADG01667.1"/>
    <property type="molecule type" value="Genomic_DNA"/>
</dbReference>
<dbReference type="EMBL" id="GU723805">
    <property type="protein sequence ID" value="ADG01668.1"/>
    <property type="molecule type" value="Genomic_DNA"/>
</dbReference>
<dbReference type="EMBL" id="GU723806">
    <property type="protein sequence ID" value="ADG01669.1"/>
    <property type="molecule type" value="Genomic_DNA"/>
</dbReference>
<dbReference type="EMBL" id="GU723807">
    <property type="protein sequence ID" value="ADG01670.1"/>
    <property type="molecule type" value="Genomic_DNA"/>
</dbReference>
<dbReference type="EMBL" id="GU723808">
    <property type="protein sequence ID" value="ADG01671.1"/>
    <property type="molecule type" value="Genomic_DNA"/>
</dbReference>
<dbReference type="EMBL" id="GU723809">
    <property type="protein sequence ID" value="ADG01672.1"/>
    <property type="molecule type" value="Genomic_DNA"/>
</dbReference>
<dbReference type="EMBL" id="GU723810">
    <property type="protein sequence ID" value="ADG01673.1"/>
    <property type="molecule type" value="Genomic_DNA"/>
</dbReference>
<dbReference type="EMBL" id="GU723811">
    <property type="protein sequence ID" value="ADG01674.1"/>
    <property type="molecule type" value="Genomic_DNA"/>
</dbReference>
<dbReference type="EMBL" id="GU723812">
    <property type="protein sequence ID" value="ADG01675.1"/>
    <property type="molecule type" value="Genomic_DNA"/>
</dbReference>
<dbReference type="EMBL" id="GU723813">
    <property type="protein sequence ID" value="ADG01676.1"/>
    <property type="molecule type" value="Genomic_DNA"/>
</dbReference>
<dbReference type="EMBL" id="GU723814">
    <property type="protein sequence ID" value="ADG01677.1"/>
    <property type="molecule type" value="Genomic_DNA"/>
</dbReference>
<dbReference type="EMBL" id="GU723815">
    <property type="protein sequence ID" value="ADG01678.1"/>
    <property type="molecule type" value="Genomic_DNA"/>
</dbReference>
<dbReference type="EMBL" id="GU723816">
    <property type="protein sequence ID" value="ADG01679.1"/>
    <property type="molecule type" value="Genomic_DNA"/>
</dbReference>
<dbReference type="EMBL" id="GU723817">
    <property type="protein sequence ID" value="ADG01680.1"/>
    <property type="molecule type" value="Genomic_DNA"/>
</dbReference>
<dbReference type="EMBL" id="GU723818">
    <property type="protein sequence ID" value="ADG01681.1"/>
    <property type="molecule type" value="Genomic_DNA"/>
</dbReference>
<dbReference type="EMBL" id="GU723819">
    <property type="protein sequence ID" value="ADG01682.1"/>
    <property type="molecule type" value="Genomic_DNA"/>
</dbReference>
<dbReference type="EMBL" id="GU723820">
    <property type="protein sequence ID" value="ADG01683.1"/>
    <property type="molecule type" value="Genomic_DNA"/>
</dbReference>
<dbReference type="EMBL" id="GU723821">
    <property type="protein sequence ID" value="ADG01684.1"/>
    <property type="molecule type" value="Genomic_DNA"/>
</dbReference>
<dbReference type="EMBL" id="GU723822">
    <property type="protein sequence ID" value="ADG01685.1"/>
    <property type="molecule type" value="Genomic_DNA"/>
</dbReference>
<dbReference type="EMBL" id="GU723823">
    <property type="protein sequence ID" value="ADG01686.1"/>
    <property type="molecule type" value="Genomic_DNA"/>
</dbReference>
<dbReference type="EMBL" id="GU723824">
    <property type="protein sequence ID" value="ADG01687.1"/>
    <property type="molecule type" value="Genomic_DNA"/>
</dbReference>
<dbReference type="EMBL" id="GU723825">
    <property type="protein sequence ID" value="ADG01688.1"/>
    <property type="molecule type" value="Genomic_DNA"/>
</dbReference>
<dbReference type="EMBL" id="GU723826">
    <property type="protein sequence ID" value="ADG01689.1"/>
    <property type="molecule type" value="Genomic_DNA"/>
</dbReference>
<dbReference type="EMBL" id="GU723827">
    <property type="protein sequence ID" value="ADG01690.1"/>
    <property type="molecule type" value="Genomic_DNA"/>
</dbReference>
<dbReference type="EMBL" id="GU723828">
    <property type="protein sequence ID" value="ADG01691.1"/>
    <property type="molecule type" value="Genomic_DNA"/>
</dbReference>
<dbReference type="EMBL" id="GU723829">
    <property type="protein sequence ID" value="ADG01692.1"/>
    <property type="molecule type" value="Genomic_DNA"/>
</dbReference>
<dbReference type="EMBL" id="GU723830">
    <property type="protein sequence ID" value="ADG01693.1"/>
    <property type="molecule type" value="Genomic_DNA"/>
</dbReference>
<dbReference type="EMBL" id="GU723831">
    <property type="protein sequence ID" value="ADG01694.1"/>
    <property type="molecule type" value="Genomic_DNA"/>
</dbReference>
<dbReference type="EMBL" id="GU723832">
    <property type="protein sequence ID" value="ADG01695.1"/>
    <property type="molecule type" value="Genomic_DNA"/>
</dbReference>
<dbReference type="EMBL" id="GU723833">
    <property type="protein sequence ID" value="ADG01696.1"/>
    <property type="molecule type" value="Genomic_DNA"/>
</dbReference>
<dbReference type="EMBL" id="GU723834">
    <property type="protein sequence ID" value="ADG01697.1"/>
    <property type="molecule type" value="Genomic_DNA"/>
</dbReference>
<dbReference type="EMBL" id="GU723835">
    <property type="protein sequence ID" value="ADG01698.1"/>
    <property type="molecule type" value="Genomic_DNA"/>
</dbReference>
<dbReference type="EMBL" id="GU723836">
    <property type="protein sequence ID" value="ADG01699.1"/>
    <property type="molecule type" value="Genomic_DNA"/>
</dbReference>
<dbReference type="EMBL" id="GU723837">
    <property type="protein sequence ID" value="ADG01700.1"/>
    <property type="molecule type" value="Genomic_DNA"/>
</dbReference>
<dbReference type="EMBL" id="GU723838">
    <property type="protein sequence ID" value="ADG01701.1"/>
    <property type="molecule type" value="Genomic_DNA"/>
</dbReference>
<dbReference type="EMBL" id="GU723839">
    <property type="protein sequence ID" value="ADG01702.1"/>
    <property type="molecule type" value="Genomic_DNA"/>
</dbReference>
<dbReference type="EMBL" id="GU723840">
    <property type="protein sequence ID" value="ADG01703.1"/>
    <property type="molecule type" value="Genomic_DNA"/>
</dbReference>
<dbReference type="EMBL" id="GU723841">
    <property type="protein sequence ID" value="ADG01704.1"/>
    <property type="molecule type" value="Genomic_DNA"/>
</dbReference>
<dbReference type="EMBL" id="GU723842">
    <property type="protein sequence ID" value="ADG01705.1"/>
    <property type="molecule type" value="Genomic_DNA"/>
</dbReference>
<dbReference type="EMBL" id="GU723843">
    <property type="protein sequence ID" value="ADG01706.1"/>
    <property type="molecule type" value="Genomic_DNA"/>
</dbReference>
<dbReference type="EMBL" id="GU723844">
    <property type="protein sequence ID" value="ADG01707.1"/>
    <property type="molecule type" value="Genomic_DNA"/>
</dbReference>
<dbReference type="EMBL" id="GU723845">
    <property type="protein sequence ID" value="ADG01708.1"/>
    <property type="molecule type" value="Genomic_DNA"/>
</dbReference>
<dbReference type="EMBL" id="GU723846">
    <property type="protein sequence ID" value="ADG01709.1"/>
    <property type="molecule type" value="Genomic_DNA"/>
</dbReference>
<dbReference type="EMBL" id="GU723847">
    <property type="protein sequence ID" value="ADG01710.1"/>
    <property type="molecule type" value="Genomic_DNA"/>
</dbReference>
<dbReference type="EMBL" id="GU723848">
    <property type="protein sequence ID" value="ADG01711.1"/>
    <property type="molecule type" value="Genomic_DNA"/>
</dbReference>
<dbReference type="EMBL" id="GU723849">
    <property type="protein sequence ID" value="ADG01712.1"/>
    <property type="molecule type" value="Genomic_DNA"/>
</dbReference>
<dbReference type="EMBL" id="GU723850">
    <property type="protein sequence ID" value="ADG01713.1"/>
    <property type="molecule type" value="Genomic_DNA"/>
</dbReference>
<dbReference type="EMBL" id="GU723851">
    <property type="protein sequence ID" value="ADG01714.1"/>
    <property type="molecule type" value="Genomic_DNA"/>
</dbReference>
<dbReference type="EMBL" id="GU723852">
    <property type="protein sequence ID" value="ADG01715.1"/>
    <property type="molecule type" value="Genomic_DNA"/>
</dbReference>
<dbReference type="EMBL" id="GU723853">
    <property type="protein sequence ID" value="ADG01716.1"/>
    <property type="molecule type" value="Genomic_DNA"/>
</dbReference>
<dbReference type="EMBL" id="GU723854">
    <property type="protein sequence ID" value="ADG01717.1"/>
    <property type="molecule type" value="Genomic_DNA"/>
</dbReference>
<dbReference type="EMBL" id="GU723855">
    <property type="protein sequence ID" value="ADG01718.1"/>
    <property type="molecule type" value="Genomic_DNA"/>
</dbReference>
<dbReference type="EMBL" id="GU723856">
    <property type="protein sequence ID" value="ADG01719.1"/>
    <property type="molecule type" value="Genomic_DNA"/>
</dbReference>
<dbReference type="EMBL" id="GU723857">
    <property type="protein sequence ID" value="ADG01720.1"/>
    <property type="molecule type" value="Genomic_DNA"/>
</dbReference>
<dbReference type="EMBL" id="GU723858">
    <property type="protein sequence ID" value="ADG01721.1"/>
    <property type="molecule type" value="Genomic_DNA"/>
</dbReference>
<dbReference type="EMBL" id="GU723859">
    <property type="protein sequence ID" value="ADG01722.1"/>
    <property type="molecule type" value="Genomic_DNA"/>
</dbReference>
<dbReference type="EMBL" id="GU723860">
    <property type="protein sequence ID" value="ADG01723.1"/>
    <property type="molecule type" value="Genomic_DNA"/>
</dbReference>
<dbReference type="EMBL" id="GU723861">
    <property type="protein sequence ID" value="ADG01724.1"/>
    <property type="molecule type" value="Genomic_DNA"/>
</dbReference>
<dbReference type="EMBL" id="GU723862">
    <property type="protein sequence ID" value="ADG01725.1"/>
    <property type="molecule type" value="Genomic_DNA"/>
</dbReference>
<dbReference type="EMBL" id="GU723863">
    <property type="protein sequence ID" value="ADG01726.1"/>
    <property type="molecule type" value="Genomic_DNA"/>
</dbReference>
<dbReference type="EMBL" id="GU723864">
    <property type="protein sequence ID" value="ADG01727.1"/>
    <property type="molecule type" value="Genomic_DNA"/>
</dbReference>
<dbReference type="EMBL" id="GU723865">
    <property type="protein sequence ID" value="ADG01728.1"/>
    <property type="molecule type" value="Genomic_DNA"/>
</dbReference>
<dbReference type="PIR" id="T05180">
    <property type="entry name" value="T05180"/>
</dbReference>
<dbReference type="RefSeq" id="NP_193869.1">
    <property type="nucleotide sequence ID" value="NM_118258.3"/>
</dbReference>
<dbReference type="SMR" id="O81905"/>
<dbReference type="BioGRID" id="13181">
    <property type="interactions" value="17"/>
</dbReference>
<dbReference type="FunCoup" id="O81905">
    <property type="interactions" value="79"/>
</dbReference>
<dbReference type="IntAct" id="O81905">
    <property type="interactions" value="9"/>
</dbReference>
<dbReference type="STRING" id="3702.O81905"/>
<dbReference type="GlyCosmos" id="O81905">
    <property type="glycosylation" value="5 sites, No reported glycans"/>
</dbReference>
<dbReference type="GlyGen" id="O81905">
    <property type="glycosylation" value="5 sites"/>
</dbReference>
<dbReference type="iPTMnet" id="O81905"/>
<dbReference type="PaxDb" id="3702-AT4G21380.1"/>
<dbReference type="ProteomicsDB" id="232872"/>
<dbReference type="EnsemblPlants" id="AT4G21380.1">
    <property type="protein sequence ID" value="AT4G21380.1"/>
    <property type="gene ID" value="AT4G21380"/>
</dbReference>
<dbReference type="GeneID" id="827890"/>
<dbReference type="Gramene" id="AT4G21380.1">
    <property type="protein sequence ID" value="AT4G21380.1"/>
    <property type="gene ID" value="AT4G21380"/>
</dbReference>
<dbReference type="KEGG" id="ath:AT4G21380"/>
<dbReference type="Araport" id="AT4G21380"/>
<dbReference type="TAIR" id="AT4G21380">
    <property type="gene designation" value="RK3"/>
</dbReference>
<dbReference type="eggNOG" id="ENOG502QS2H">
    <property type="taxonomic scope" value="Eukaryota"/>
</dbReference>
<dbReference type="HOGENOM" id="CLU_000288_116_1_1"/>
<dbReference type="InParanoid" id="O81905"/>
<dbReference type="PhylomeDB" id="O81905"/>
<dbReference type="PRO" id="PR:O81905"/>
<dbReference type="Proteomes" id="UP000006548">
    <property type="component" value="Chromosome 4"/>
</dbReference>
<dbReference type="ExpressionAtlas" id="O81905">
    <property type="expression patterns" value="baseline and differential"/>
</dbReference>
<dbReference type="GO" id="GO:0005886">
    <property type="term" value="C:plasma membrane"/>
    <property type="evidence" value="ECO:0007005"/>
    <property type="project" value="TAIR"/>
</dbReference>
<dbReference type="GO" id="GO:0009506">
    <property type="term" value="C:plasmodesma"/>
    <property type="evidence" value="ECO:0007005"/>
    <property type="project" value="TAIR"/>
</dbReference>
<dbReference type="GO" id="GO:0005773">
    <property type="term" value="C:vacuole"/>
    <property type="evidence" value="ECO:0007005"/>
    <property type="project" value="TAIR"/>
</dbReference>
<dbReference type="GO" id="GO:0005524">
    <property type="term" value="F:ATP binding"/>
    <property type="evidence" value="ECO:0007669"/>
    <property type="project" value="UniProtKB-KW"/>
</dbReference>
<dbReference type="GO" id="GO:0030246">
    <property type="term" value="F:carbohydrate binding"/>
    <property type="evidence" value="ECO:0007669"/>
    <property type="project" value="UniProtKB-KW"/>
</dbReference>
<dbReference type="GO" id="GO:0106310">
    <property type="term" value="F:protein serine kinase activity"/>
    <property type="evidence" value="ECO:0007669"/>
    <property type="project" value="RHEA"/>
</dbReference>
<dbReference type="GO" id="GO:0004675">
    <property type="term" value="F:transmembrane receptor protein serine/threonine kinase activity"/>
    <property type="evidence" value="ECO:0000250"/>
    <property type="project" value="TAIR"/>
</dbReference>
<dbReference type="GO" id="GO:0031625">
    <property type="term" value="F:ubiquitin protein ligase binding"/>
    <property type="evidence" value="ECO:0000353"/>
    <property type="project" value="UniProtKB"/>
</dbReference>
<dbReference type="GO" id="GO:0048544">
    <property type="term" value="P:recognition of pollen"/>
    <property type="evidence" value="ECO:0007669"/>
    <property type="project" value="InterPro"/>
</dbReference>
<dbReference type="CDD" id="cd00028">
    <property type="entry name" value="B_lectin"/>
    <property type="match status" value="1"/>
</dbReference>
<dbReference type="CDD" id="cd01098">
    <property type="entry name" value="PAN_AP_plant"/>
    <property type="match status" value="1"/>
</dbReference>
<dbReference type="CDD" id="cd14066">
    <property type="entry name" value="STKc_IRAK"/>
    <property type="match status" value="1"/>
</dbReference>
<dbReference type="FunFam" id="1.10.510.10:FF:000060">
    <property type="entry name" value="G-type lectin S-receptor-like serine/threonine-protein kinase"/>
    <property type="match status" value="1"/>
</dbReference>
<dbReference type="FunFam" id="2.90.10.10:FF:000047">
    <property type="entry name" value="Putative inactive G-type lectin S-receptor-like serine/threonine-protein kinase SRK"/>
    <property type="match status" value="1"/>
</dbReference>
<dbReference type="FunFam" id="3.30.200.20:FF:000145">
    <property type="entry name" value="receptor-like serine/threonine-protein kinase SD1-8"/>
    <property type="match status" value="1"/>
</dbReference>
<dbReference type="Gene3D" id="2.90.10.10">
    <property type="entry name" value="Bulb-type lectin domain"/>
    <property type="match status" value="1"/>
</dbReference>
<dbReference type="Gene3D" id="3.30.200.20">
    <property type="entry name" value="Phosphorylase Kinase, domain 1"/>
    <property type="match status" value="1"/>
</dbReference>
<dbReference type="Gene3D" id="1.10.510.10">
    <property type="entry name" value="Transferase(Phosphotransferase) domain 1"/>
    <property type="match status" value="1"/>
</dbReference>
<dbReference type="InterPro" id="IPR001480">
    <property type="entry name" value="Bulb-type_lectin_dom"/>
</dbReference>
<dbReference type="InterPro" id="IPR036426">
    <property type="entry name" value="Bulb-type_lectin_dom_sf"/>
</dbReference>
<dbReference type="InterPro" id="IPR011009">
    <property type="entry name" value="Kinase-like_dom_sf"/>
</dbReference>
<dbReference type="InterPro" id="IPR003609">
    <property type="entry name" value="Pan_app"/>
</dbReference>
<dbReference type="InterPro" id="IPR000719">
    <property type="entry name" value="Prot_kinase_dom"/>
</dbReference>
<dbReference type="InterPro" id="IPR017441">
    <property type="entry name" value="Protein_kinase_ATP_BS"/>
</dbReference>
<dbReference type="InterPro" id="IPR022126">
    <property type="entry name" value="S-locus_recpt_kinase"/>
</dbReference>
<dbReference type="InterPro" id="IPR021820">
    <property type="entry name" value="S-locus_recpt_kinase_C"/>
</dbReference>
<dbReference type="InterPro" id="IPR000858">
    <property type="entry name" value="S_locus_glycoprot_dom"/>
</dbReference>
<dbReference type="InterPro" id="IPR001245">
    <property type="entry name" value="Ser-Thr/Tyr_kinase_cat_dom"/>
</dbReference>
<dbReference type="InterPro" id="IPR008271">
    <property type="entry name" value="Ser/Thr_kinase_AS"/>
</dbReference>
<dbReference type="InterPro" id="IPR024171">
    <property type="entry name" value="SRK-like_kinase"/>
</dbReference>
<dbReference type="PANTHER" id="PTHR32444">
    <property type="entry name" value="BULB-TYPE LECTIN DOMAIN-CONTAINING PROTEIN"/>
    <property type="match status" value="1"/>
</dbReference>
<dbReference type="PANTHER" id="PTHR32444:SF89">
    <property type="entry name" value="S GLYCOPROTEIN"/>
    <property type="match status" value="1"/>
</dbReference>
<dbReference type="Pfam" id="PF01453">
    <property type="entry name" value="B_lectin"/>
    <property type="match status" value="1"/>
</dbReference>
<dbReference type="Pfam" id="PF11883">
    <property type="entry name" value="DUF3403"/>
    <property type="match status" value="1"/>
</dbReference>
<dbReference type="Pfam" id="PF12398">
    <property type="entry name" value="DUF3660"/>
    <property type="match status" value="1"/>
</dbReference>
<dbReference type="Pfam" id="PF08276">
    <property type="entry name" value="PAN_2"/>
    <property type="match status" value="1"/>
</dbReference>
<dbReference type="Pfam" id="PF07714">
    <property type="entry name" value="PK_Tyr_Ser-Thr"/>
    <property type="match status" value="1"/>
</dbReference>
<dbReference type="Pfam" id="PF00954">
    <property type="entry name" value="S_locus_glycop"/>
    <property type="match status" value="1"/>
</dbReference>
<dbReference type="PIRSF" id="PIRSF000641">
    <property type="entry name" value="SRK"/>
    <property type="match status" value="1"/>
</dbReference>
<dbReference type="SMART" id="SM00108">
    <property type="entry name" value="B_lectin"/>
    <property type="match status" value="1"/>
</dbReference>
<dbReference type="SMART" id="SM00473">
    <property type="entry name" value="PAN_AP"/>
    <property type="match status" value="1"/>
</dbReference>
<dbReference type="SMART" id="SM00220">
    <property type="entry name" value="S_TKc"/>
    <property type="match status" value="1"/>
</dbReference>
<dbReference type="SUPFAM" id="SSF51110">
    <property type="entry name" value="alpha-D-mannose-specific plant lectins"/>
    <property type="match status" value="1"/>
</dbReference>
<dbReference type="SUPFAM" id="SSF56112">
    <property type="entry name" value="Protein kinase-like (PK-like)"/>
    <property type="match status" value="1"/>
</dbReference>
<dbReference type="PROSITE" id="PS50927">
    <property type="entry name" value="BULB_LECTIN"/>
    <property type="match status" value="1"/>
</dbReference>
<dbReference type="PROSITE" id="PS50948">
    <property type="entry name" value="PAN"/>
    <property type="match status" value="1"/>
</dbReference>
<dbReference type="PROSITE" id="PS00107">
    <property type="entry name" value="PROTEIN_KINASE_ATP"/>
    <property type="match status" value="1"/>
</dbReference>
<dbReference type="PROSITE" id="PS50011">
    <property type="entry name" value="PROTEIN_KINASE_DOM"/>
    <property type="match status" value="1"/>
</dbReference>
<dbReference type="PROSITE" id="PS00108">
    <property type="entry name" value="PROTEIN_KINASE_ST"/>
    <property type="match status" value="1"/>
</dbReference>
<accession>O81905</accession>
<accession>A3RCC7</accession>
<accession>A7Y5X0</accession>
<accession>D6NTP9</accession>
<accession>D6NTQ1</accession>
<accession>D6NTQ4</accession>
<accession>D6NTQ5</accession>
<accession>D6NTQ8</accession>
<accession>D6NTR0</accession>
<accession>D6NTR1</accession>
<accession>D6NTR5</accession>
<accession>D6NTR7</accession>
<accession>D6NTR8</accession>
<accession>D6NTS3</accession>
<accession>D6NTS6</accession>
<accession>D6NTS8</accession>
<accession>D6NTT4</accession>
<accession>D6NTV2</accession>
<accession>D6NTX2</accession>
<accession>Q9S971</accession>
<sequence length="850" mass="96466">MRGLPNFYHSYTFFFFFLLILFPAYSISANTLSASESLTISSNNTIVSPGNVFELGFFKPGLDSRWYLGIWYKAISKRTYVWVANRDTPLSSSIGTLKISDSNLVVLDQSDTPVWSTNLTGGDVRSPLVAELLDNGNFVLRDSKNSAPDGVLWQSFDFPTDTLLPEMKLGWDAKTGFNRFIRSWKSPDDPSSGDFSFKLETEGFPEIFLWNRESRMYRSGPWNGIRFSGVPEMQPFEYMVFNFTTSKEEVTYSFRITKSDVYSRLSISSSGLLQRFTWIETAQNWNQFWYAPKDQCDEYKECGVYGYCDSNTSPVCNCIKGFKPRNPQVWGLRDGSDGCVRKTLLSCGGGDGFVRLKKMKLPDTTTASVDRGIGVKECEQKCLRDCNCTAFANTDIRGSGSGCVTWTGELFDIRNYAKGGQDLYVRLAATDLEDKRNRSAKIIGSSIGVSVLLLLSFIIFFLWKRKQKRSILIETPIVDHQLRSRDLLMNEVVISSRRHISRENNTDDLELPLMEFEEVAMATNNFSNANKLGQGGFGIVYKGKLLDGQEMAVKRLSKTSVQGTDEFKNEVKLIARLQHINLVRLLACCVDAGEKMLIYEYLENLSLDSHLFDKSRNSKLNWQMRFDIINGIARGLLYLHQDSRFRIIHRDLKASNILLDKYMTPKISDFGMARIFGRDETEANTRKVVGTYGYMSPEYAMDGIFSMKSDVFSFGVLLLEIISSKRNKGFYNSDRDLNLLGCVWRNWKEGKGLEIIDPIITDSSSTFRQHEILRCIQIGLLCVQERAEDRPTMSLVILMLGSESTTIPQPKAPGYCLERSLLDTDSSSSKQRDDESWTVNQITVSVLDAR</sequence>
<evidence type="ECO:0000250" key="1"/>
<evidence type="ECO:0000255" key="2"/>
<evidence type="ECO:0000255" key="3">
    <source>
        <dbReference type="PROSITE-ProRule" id="PRU00038"/>
    </source>
</evidence>
<evidence type="ECO:0000255" key="4">
    <source>
        <dbReference type="PROSITE-ProRule" id="PRU00159"/>
    </source>
</evidence>
<evidence type="ECO:0000255" key="5">
    <source>
        <dbReference type="PROSITE-ProRule" id="PRU00315"/>
    </source>
</evidence>
<evidence type="ECO:0000255" key="6">
    <source>
        <dbReference type="PROSITE-ProRule" id="PRU10027"/>
    </source>
</evidence>
<evidence type="ECO:0000269" key="7">
    <source>
    </source>
</evidence>
<evidence type="ECO:0000269" key="8">
    <source>
    </source>
</evidence>
<evidence type="ECO:0000269" key="9">
    <source>
    </source>
</evidence>
<evidence type="ECO:0000269" key="10">
    <source>
    </source>
</evidence>
<evidence type="ECO:0000269" key="11">
    <source>
    </source>
</evidence>
<evidence type="ECO:0000269" key="12">
    <source>
    </source>
</evidence>
<evidence type="ECO:0000269" key="13">
    <source>
    </source>
</evidence>
<evidence type="ECO:0000305" key="14"/>
<organism>
    <name type="scientific">Arabidopsis thaliana</name>
    <name type="common">Mouse-ear cress</name>
    <dbReference type="NCBI Taxonomy" id="3702"/>
    <lineage>
        <taxon>Eukaryota</taxon>
        <taxon>Viridiplantae</taxon>
        <taxon>Streptophyta</taxon>
        <taxon>Embryophyta</taxon>
        <taxon>Tracheophyta</taxon>
        <taxon>Spermatophyta</taxon>
        <taxon>Magnoliopsida</taxon>
        <taxon>eudicotyledons</taxon>
        <taxon>Gunneridae</taxon>
        <taxon>Pentapetalae</taxon>
        <taxon>rosids</taxon>
        <taxon>malvids</taxon>
        <taxon>Brassicales</taxon>
        <taxon>Brassicaceae</taxon>
        <taxon>Camelineae</taxon>
        <taxon>Arabidopsis</taxon>
    </lineage>
</organism>
<protein>
    <recommendedName>
        <fullName>Receptor-like serine/threonine-protein kinase SD1-8</fullName>
        <ecNumber>2.7.11.1</ecNumber>
    </recommendedName>
    <alternativeName>
        <fullName>Arabidopsis thaliana receptor kinase 3</fullName>
    </alternativeName>
    <alternativeName>
        <fullName>S-domain-1 (SD1) receptor kinase 8</fullName>
        <shortName>SD1-8</shortName>
    </alternativeName>
</protein>
<feature type="signal peptide" evidence="2">
    <location>
        <begin position="1"/>
        <end position="26"/>
    </location>
</feature>
<feature type="chain" id="PRO_0000401296" description="Receptor-like serine/threonine-protein kinase SD1-8">
    <location>
        <begin position="27"/>
        <end position="850"/>
    </location>
</feature>
<feature type="topological domain" description="Extracellular" evidence="2">
    <location>
        <begin position="27"/>
        <end position="441"/>
    </location>
</feature>
<feature type="transmembrane region" description="Helical" evidence="2">
    <location>
        <begin position="442"/>
        <end position="462"/>
    </location>
</feature>
<feature type="topological domain" description="Cytoplasmic" evidence="2">
    <location>
        <begin position="463"/>
        <end position="850"/>
    </location>
</feature>
<feature type="domain" description="Bulb-type lectin" evidence="3">
    <location>
        <begin position="31"/>
        <end position="153"/>
    </location>
</feature>
<feature type="domain" description="EGF-like">
    <location>
        <begin position="292"/>
        <end position="328"/>
    </location>
</feature>
<feature type="domain" description="PAN" evidence="5">
    <location>
        <begin position="347"/>
        <end position="428"/>
    </location>
</feature>
<feature type="domain" description="Protein kinase" evidence="4">
    <location>
        <begin position="526"/>
        <end position="807"/>
    </location>
</feature>
<feature type="region of interest" description="CaM-binding" evidence="1">
    <location>
        <begin position="615"/>
        <end position="632"/>
    </location>
</feature>
<feature type="active site" description="Proton acceptor" evidence="4 6">
    <location>
        <position position="651"/>
    </location>
</feature>
<feature type="binding site" evidence="4">
    <location>
        <begin position="532"/>
        <end position="540"/>
    </location>
    <ligand>
        <name>ATP</name>
        <dbReference type="ChEBI" id="CHEBI:30616"/>
    </ligand>
</feature>
<feature type="binding site" evidence="4">
    <location>
        <position position="554"/>
    </location>
    <ligand>
        <name>ATP</name>
        <dbReference type="ChEBI" id="CHEBI:30616"/>
    </ligand>
</feature>
<feature type="glycosylation site" description="N-linked (GlcNAc...) asparagine" evidence="2">
    <location>
        <position position="43"/>
    </location>
</feature>
<feature type="glycosylation site" description="N-linked (GlcNAc...) asparagine" evidence="2">
    <location>
        <position position="118"/>
    </location>
</feature>
<feature type="glycosylation site" description="N-linked (GlcNAc...) asparagine" evidence="2">
    <location>
        <position position="242"/>
    </location>
</feature>
<feature type="glycosylation site" description="N-linked (GlcNAc...) asparagine" evidence="2">
    <location>
        <position position="387"/>
    </location>
</feature>
<feature type="glycosylation site" description="N-linked (GlcNAc...) asparagine" evidence="2">
    <location>
        <position position="437"/>
    </location>
</feature>
<feature type="disulfide bond" evidence="1">
    <location>
        <begin position="296"/>
        <end position="308"/>
    </location>
</feature>
<feature type="disulfide bond" evidence="1">
    <location>
        <begin position="302"/>
        <end position="316"/>
    </location>
</feature>
<feature type="disulfide bond" evidence="1">
    <location>
        <begin position="378"/>
        <end position="403"/>
    </location>
</feature>
<feature type="disulfide bond" evidence="1">
    <location>
        <begin position="382"/>
        <end position="388"/>
    </location>
</feature>
<feature type="sequence variant" description="In strain: cv. Bor-1, cv. Pu2-23, cv. Pu2-7, cv. Wa-1, cv. Wassilewskija." evidence="12">
    <original>A</original>
    <variation>T</variation>
    <location>
        <position position="34"/>
    </location>
</feature>
<feature type="sequence variant" description="In strain: cv. Bay-0, cv. Bil-5, cv. Bil-7, cv. Bor-1, cv. Bor-4, cv. Br-0, cv. Bur-0, cv. Ed-1, cv. Edi-0, cv. Fab-2, cv. Fab-4, cv. Ga-0, cv. Ge-0, cv. Goettingen-7, cv. HR-10, cv. Lov-1, cv. Lov-5, cv. Lz-0, cv. Mr-0, cv. Mrk-0, cv. Mz-0, cv. Nd-1, cv. Nok-3, cv. Omo2-1, cv. Omo2-3, cv. Oy-0, cv. Pu2-23, cv. Pu2-7, cv. Ra-0, cv. Spr1-2, cv. Sq-8, cv. Ts-1, cv. Uod-1, cv. Var2-1, cv. Var2-6, cv. Wa-1, cv. Wassilewskija, cv. Wt-5, cv. Zdr-1, cv. Zdr-6." evidence="12">
    <original>T</original>
    <variation>I</variation>
    <location>
        <position position="45"/>
    </location>
</feature>
<feature type="sequence variant" description="In strain: cv. Bay-0, cv. Bil-5, cv. Bil-7, cv. Bor-1, cv. Br-0, cv. Bur-0, cv. Ed-1, cv. Edi-0, cv. Fab-2, cv. Fab-4, cv. Ga-0, cv. Ge-0, cv. Goettingen-7, cv. HR-10, cv. Lov-1, cv. Lov-5, cv. Lz-0, cv. Mr-0, cv. Mrk-0, cv. Mz-0, cv. Nd-1, cv. Nok-3, cv. Omo2-1, cv. Omo2-3, cv. Oy-0, cv. Pu2-23, cv. Pu2-7, cv. Ra-0, cv. Spr1-2, cv. Sq-8, cv. Ts-1, cv. Uod-1, cv. Var2-1, cv. Var2-6, cv. Wa-1, cv. Wassilewskija, cv. Wt-5, cv. Zdr-1, cv. Zdr-6." evidence="12">
    <original>D</original>
    <variation>N</variation>
    <location>
        <position position="63"/>
    </location>
</feature>
<feature type="sequence variant" description="In strain: cv. Bay-0, cv. Bil-5, cv. Bil-7, cv. Bor-1, cv. Br-0, cv. Bur-0, cv. Ed-1, cv. Edi-0, cv. Fab-2, cv. Fab-4, cv. Ga-0, cv. Ge-0, cv. Goettingen-7, cv. HR-10, cv. Lov-1, cv. Lov-5, cv. Lz-0, cv. Mr-0, cv. Mrk-0, cv. Mz-0, cv. Nd-1, cv. Nok-3, cv. Omo2-1, cv. Omo2-3, cv. Oy-0, cv. Pu2-23, cv. Pu2-7, cv. Ra-0, cv. Spr1-2, cv. Sq-8, cv. Ts-1, cv. Uod-1, cv. Var2-1, cv. Var2-6, cv. Wa-1, cv. Wassilewskija, cv. Wt-5, cv. Zdr-1, cv. Zdr-6." evidence="12">
    <original>A</original>
    <variation>T</variation>
    <location>
        <position position="74"/>
    </location>
</feature>
<feature type="sequence variant" description="In strain: cv. Ag-0, cv. An-1, cv. Bay-0, cv. Bil-5, cv. Bil-7, cv. Bor-1, cv. Br-0, cv. Bur-0, cv. C24, cv. CIBC-17, cv. Ct-1, cv. Ed-1, cv. Edi-0, cv. Fab-2, cv. Fab-4, cv. Fei-0, cv. Ga-0, cv. Ge-0, cv. Goettingen-22, cv. Goettingen-7, cv. Gy-0, cv. HR-10, cv. Ll-0, cv. Lov-1, cv. Lov-5, cv. Lz-0, cv. Mr-0, cv. Mrk-0, cv. Mt-0, cv. Mz-0, cv. NFA-10, cv. NFA-8, cv. Nd-1, cv. Nok-3, cv. Omo2-1, cv. Omo2-3, cv. Oy-0, cv. Pu2-23, cv. Pu2-7, cv. REN-11, cv. Ra-0, cv. Se-0, cv. Spr1-2, cv. Sq-1, cv. Sq-8, cv. Ts-1, cv. Ts-5, cv. Ull2-3, cv. Uod-1, cv. Uod-7, cv. Var2-1, cv. Var2-6, cv. Wa-1, cv. Wassilewskija, cv. Wei-0, cv. Wt-5, cv. Zdr-1." evidence="9 12">
    <original>S</original>
    <variation>N</variation>
    <location>
        <position position="102"/>
    </location>
</feature>
<feature type="sequence variant" description="In strain: cv. Est-1, cv. Wassilewskija-2." evidence="12">
    <original>G</original>
    <variation>R</variation>
    <location>
        <position position="150"/>
    </location>
</feature>
<feature type="sequence variant" description="In strain: cv. CIBC-5, cv. Ed-2, cv. HR-5, cv. Spr1-6, cv. Ull2-5." evidence="12">
    <original>A</original>
    <variation>G</variation>
    <location>
        <position position="173"/>
    </location>
</feature>
<feature type="sequence variant" description="In strain: cv. Ler-1, cv. Lp2-2, cv. Lp2-6, cv. Tamm-2, cv. Tamm-27." evidence="12">
    <original>V</original>
    <variation>I</variation>
    <location>
        <position position="240"/>
    </location>
</feature>
<feature type="sequence variant" description="In strain: cv. HR-10." evidence="12">
    <original>ITKS</original>
    <variation>VTKR</variation>
    <location>
        <begin position="256"/>
        <end position="259"/>
    </location>
</feature>
<feature type="sequence variant" description="In strain: cv. Edi-0, cv. Ga-0, cv. Mrk-0, cv. Mz-0, cv. Nd-1, cv. Omo2-3, cv. Oy-0, cv. Sq-8, cv. Ts-1, cv. Zdr-1." evidence="12">
    <original>IT</original>
    <variation>VS</variation>
    <location>
        <begin position="256"/>
        <end position="257"/>
    </location>
</feature>
<feature type="sequence variant" description="In strain: cv. Ag-0, cv. An-1, cv. Bay-0, cv. Bil-5, cv. Bil-7, cv. Bor-1, cv. Br-0, cv. Bur-0, cv. C24, cv. CIBC-17, cv. Ct-1, cv. Cvi-0, cv. Ed-1, cv. Fab-2, cv. Fab-4, cv. Fei-0, cv. Ge-0, cv. Goettingen-22, cv. Goettingen-7, cv. Gy-0, cv. Ll-0, cv. Lov-1, cv. Lov-5, cv. Lz-0, cv. Mr-0, cv. Mt-0, cv. NFA-10, cv. NFA-8, cv. Nok-3, cv. Omo2-1, cv. Pu2-23, cv. Pu2-7, cv. REN-11, cv. Ra-0, cv. Se-0, cv. Spr1-2, cv. Sq-1, cv. Ts-5, cv. Ull2-3, cv. Uod-1, cv. Uod-7, cv. Var2-1, cv. Var2-6, cv. Wa-1, cv. Wassilewskija, cv. Wei-0, cv. Wt-5." evidence="9 10 12">
    <original>I</original>
    <variation>V</variation>
    <location>
        <position position="256"/>
    </location>
</feature>
<feature type="sequence variant" description="In strain: cv. Ag-0, cv. An-1, cv. Bay-0, cv. Bil-5, cv. Bil-7, cv. Bor-1, cv. Br-0, cv. Bur-0, cv. C24, cv. CIBC-17, cv. Ct-1, cv. Ed-1, cv. Edi-0, cv. Fab-2, cv. Fab-4, cv. Fei-0, cv. Ga-0, cv. Ge-0, cv. Goettingen-22, cv. Goettingen-7, cv. Gy-0, cv. HR-10, cv. Ll-0, cv. Lov-1, cv. Lov-5, cv. Lz-0, cv. Mr-0, cv. Mrk-0, cv. Mt-0, cv. Mz-0, cv. NFA-10, cv. NFA-8, cv. Nd-1, cv. Nok-3, cv. Omo2-1, cv. Omo2-3, cv. Oy-0, cv. Pu2-23, cv. Pu2-7, cv. REN-11, cv. Ra-0, cv. Se-0, cv. Spr1-2, cv. Sq-1, cv. Sq-8, cv. Ts-1, cv. Ts-5, cv. Ull2-3, cv. Uod-1, cv. Uod-7, cv. Var2-1, cv. Var2-6, cv. Wa-1, cv. Wassilewskija, cv. Wei-0, cv. Wt-5, cv. Zdr-1." evidence="9 12">
    <original>S</original>
    <variation>T</variation>
    <location>
        <position position="270"/>
    </location>
</feature>
<feature type="sequence variant" description="In strain: cv. Goettingen-7." evidence="12">
    <original>V</original>
    <variation>I</variation>
    <location>
        <position position="304"/>
    </location>
</feature>
<feature type="sequence variant" description="In strain: cv. CIBC-5, cv. Ed-2, cv. HR-5, cv. Spr1-6, cv. Ull2-5." evidence="12">
    <original>S</original>
    <variation>T</variation>
    <location>
        <position position="346"/>
    </location>
</feature>
<feature type="sequence variant" description="In strain: cv. Lz-0." evidence="12">
    <original>L</original>
    <variation>C</variation>
    <location>
        <position position="361"/>
    </location>
</feature>
<feature type="sequence variant" description="In strain: cv. Ag-0, cv. An-1, cv. Bay-0, cv. Bil-5, cv. Bil-7, cv. Bor-1, cv. Br-0, cv. Bur-0, cv. C24, cv. CIBC-17, cv. Ct-1, cv. Ed-1, cv. Edi-0, cv. Fab-4, cv. Fei-0, cv. Ga-0, cv. Ge-0, cv. Goettingen-22, cv. Goettingen-7, cv. Gy-0, cv. HR-10, cv. Ll-0, cv. Lov-1, cv. Lov-5, cv. Lz-0, cv. Mr-0, cv. Mrk-0, cv. Mz-0, cv. NFA-10, cv. NFA-8, cv. Nd-1, cv. Nok-3, cv. Omo2-1, cv. Omo2-3, cv. Oy-0, cv. Pu2-23, cv. Pu2-7, cv. REN-11, cv. Ra-0, cv. Se-0, cv. Sq-1, cv. Sq-8, cv. Ts-1, cv. Ts-5, cv. Ull2-3, cv. Uod-1, cv. Uod-7, cv. Wa-1, cv. Wassilewskija, cv. Wei-0, cv. Wt-5, cv. Zdr-1." evidence="9 12">
    <original>T</original>
    <variation>M</variation>
    <location>
        <position position="366"/>
    </location>
</feature>
<feature type="sequence variant" description="In strain: cv. C24, cv. Mt-0." evidence="12">
    <original>T</original>
    <variation>R</variation>
    <location>
        <position position="366"/>
    </location>
</feature>
<feature type="sequence variant" description="In strain: cv. Ag-0, cv. An-1, cv. Bay-0, cv. Bil-5, cv. Bil-7, cv. Bor-1, cv. Br-0, cv. Bur-0, cv. C24, cv. CIBC-17, cv. Ct-1, cv. Ed-1, cv. Edi-0, cv. Fab-4, cv. Fei-0, cv. Ga-0, cv. Ge-0, cv. Goettingen-22, cv. Goettingen-7, cv. Gy-0, cv. HR-10, cv. Ll-0, cv. Lov-1, cv. Lov-5, cv. Lz-0, cv. Mr-0, cv. Mrk-0, cv. Mt-0, cv. Mz-0, cv. NFA-10, cv. NFA-8, cv. Nd-1, cv. Nok-3, cv. Omo2-1, cv. Omo2-3, cv. Oy-0, cv. Pu2-23, cv. Pu2-7, cv. REN-11, cv. Ra-0, cv. Se-0, cv. Sq-1, cv. Sq-8, cv. Ts-1, cv. Ts-5, cv. Ull2-3, cv. Uod-1, cv. Uod-7, cv. Wa-1, cv. Wassilewskija, cv. Wei-0, cv. Wt-5, cv. Zdr-1." evidence="9 12">
    <original>V</original>
    <variation>L</variation>
    <location>
        <position position="375"/>
    </location>
</feature>
<feature type="sequence variant" description="In strain: cv. Ag-0, cv. An-1, cv. Bay-0, cv. Bil-5, cv. Bil-7, cv. Bor-1, cv. Br-0, cv. Bur-0, cv. C24, cv. CIBC-17, cv. Ct-1, cv. Ed-1, cv. Edi-0, cv. Fab-4, cv. Fei-0, cv. Ga-0, cv. Ge-0, cv. Goettingen-22, cv. Goettingen-7, cv. Gy-0, cv. HR-10, cv. Ll-0, cv. Lov-1, cv. Lov-5, cv. Lz-0, cv. Mr-0, cv. Mrk-0, cv. Mt-0, cv. Mz-0, cv. NFA-10, cv. NFA-8, cv. Nd-1, cv. Nok-3, cv. Omo2-1, cv. Omo2-3, cv. Oy-0, cv. Pu2-23, cv. Pu2-7, cv. REN-11, cv. Ra-0, cv. Se-0, cv. Sq-1, cv. Sq-8, cv. Ts-1, cv. Ts-5, cv. Ull2-3, cv. Uod-1, cv. Uod-7, cv. Wa-1, cv. Wassilewskija, cv. Wei-0, cv. Wt-5, cv. Zdr-1." evidence="9 12">
    <original>R</original>
    <variation>K</variation>
    <location>
        <position position="384"/>
    </location>
</feature>
<feature type="sequence variant" description="In strain: cv. Fab-2." evidence="12">
    <original>C</original>
    <variation>S</variation>
    <location>
        <position position="386"/>
    </location>
</feature>
<feature type="sequence variant" description="In strain: cv. Ag-0, cv. An-1, cv. Bay-0, cv. Bil-5, cv. Bil-7, cv. Bor-1, cv. Br-0, cv. Bur-0, cv. C24, cv. CIBC-17, cv. Ct-1, cv. Ed-1, cv. Edi-0, cv. Fab-4, cv. Fei-0, cv. Ga-0, cv. Ge-0, cv. Goettingen-22, cv. Goettingen-7, cv. Gy-0, cv. HR-10, cv. Ll-0, cv. Lov-1, cv. Lov-5, cv. Lz-0, cv. Mr-0, cv. Mrk-0, cv. Mt-0, cv. Mz-0, cv. NFA-10, cv. NFA-8, cv. Nd-1, cv. Nok-3, cv. Omo2-1, cv. Omo2-3, cv. Oy-0, cv. Pu2-23, cv. Pu2-7, cv. REN-11, cv. Ra-0, cv. Se-0, cv. Sq-1, cv. Sq-8, cv. Ts-1, cv. Ts-5, cv. Ull2-3, cv. Uod-1, cv. Uod-7, cv. Wa-1, cv. Wassilewskija, cv. Wei-0, cv. Wt-5, cv. Zdr-1." evidence="9 12">
    <original>T</original>
    <variation>I</variation>
    <location>
        <position position="405"/>
    </location>
</feature>
<feature type="sequence conflict" description="In Ref. 3; ABV21214." evidence="14" ref="3">
    <original>S</original>
    <variation>F</variation>
    <location>
        <position position="100"/>
    </location>
</feature>
<feature type="sequence conflict" description="In Ref. 3; ABV21214." evidence="14" ref="3">
    <original>SAPDGV</original>
    <variation>NDSDGF</variation>
    <location>
        <begin position="146"/>
        <end position="151"/>
    </location>
</feature>
<feature type="sequence conflict" description="In Ref. 3; ABV21214." evidence="14" ref="3">
    <original>S</original>
    <variation>G</variation>
    <location>
        <position position="456"/>
    </location>
</feature>
<feature type="sequence conflict" description="In Ref. 2; ABN05291." evidence="14" ref="2">
    <original>IFF</original>
    <variation>VFI</variation>
    <location>
        <begin position="459"/>
        <end position="461"/>
    </location>
</feature>
<feature type="sequence conflict" description="In Ref. 2; ABN05291." evidence="14" ref="2">
    <original>IETPIVDHQL</original>
    <variation>SETPTVDHQV</variation>
    <location>
        <begin position="473"/>
        <end position="482"/>
    </location>
</feature>
<feature type="sequence conflict" description="In Ref. 3; ABV21214." evidence="14" ref="3">
    <original>L</original>
    <variation>V</variation>
    <location>
        <position position="482"/>
    </location>
</feature>
<feature type="sequence conflict" description="In Ref. 2; ABN05291." evidence="14" ref="2">
    <original>M</original>
    <variation>K</variation>
    <location>
        <position position="489"/>
    </location>
</feature>
<feature type="sequence conflict" description="In Ref. 2; ABN05291." evidence="14" ref="2">
    <original>SN</original>
    <variation>CT</variation>
    <location>
        <begin position="527"/>
        <end position="528"/>
    </location>
</feature>
<feature type="sequence conflict" description="In Ref. 3; ABV21214 and 2; ABN05291." evidence="14" ref="3 2">
    <original>N</original>
    <variation>S</variation>
    <location>
        <position position="617"/>
    </location>
</feature>
<feature type="sequence conflict" description="In Ref. 2; ABN05291." evidence="14" ref="2">
    <original>F</original>
    <variation>Y</variation>
    <location>
        <position position="626"/>
    </location>
</feature>
<feature type="sequence conflict" description="In Ref. 3; ABV21214." evidence="14" ref="3">
    <original>F</original>
    <variation>Y</variation>
    <location>
        <position position="705"/>
    </location>
</feature>
<feature type="sequence conflict" description="In Ref. 2; ABN05291." evidence="14" ref="2">
    <original>SS</original>
    <variation>CG</variation>
    <location>
        <begin position="723"/>
        <end position="724"/>
    </location>
</feature>
<feature type="sequence conflict" description="In Ref. 3; ABV21214." evidence="14" ref="3">
    <original>S</original>
    <variation>G</variation>
    <location>
        <position position="724"/>
    </location>
</feature>
<feature type="sequence conflict" description="In Ref. 3; ABV21214." evidence="14" ref="3">
    <original>D</original>
    <variation>G</variation>
    <location>
        <position position="762"/>
    </location>
</feature>
<feature type="sequence conflict" description="In Ref. 1; no nucleotide entry." evidence="14" ref="1">
    <original>S</original>
    <variation>SL</variation>
    <location>
        <position position="763"/>
    </location>
</feature>
<feature type="sequence conflict" description="In Ref. 3; ABV21214." evidence="14" ref="3">
    <original>D</original>
    <variation>E</variation>
    <location>
        <position position="789"/>
    </location>
</feature>
<feature type="sequence conflict" description="In Ref. 3; ABV21214 and 2; ABN05291." evidence="14" ref="3 2">
    <original>I</original>
    <variation>V</variation>
    <location>
        <position position="797"/>
    </location>
</feature>
<feature type="sequence conflict" description="In Ref. 3; ABV21214 and 2; ABN05291." evidence="14" ref="3 2">
    <original>A</original>
    <variation>S</variation>
    <location>
        <position position="812"/>
    </location>
</feature>
<feature type="sequence conflict" description="In Ref. 3; ABV21214 and 2; ABN05291." evidence="14" ref="3 2">
    <original>ERSL</original>
    <variation>GRSP</variation>
    <location>
        <begin position="818"/>
        <end position="821"/>
    </location>
</feature>
<feature type="sequence conflict" description="In Ref. 2; ABN05291." evidence="14" ref="2">
    <original>SWT</original>
    <variation>CWS</variation>
    <location>
        <begin position="836"/>
        <end position="838"/>
    </location>
</feature>
<feature type="sequence conflict" description="In Ref. 3; ABV21214." evidence="14" ref="3">
    <original>D</original>
    <variation>E</variation>
    <location>
        <position position="848"/>
    </location>
</feature>
<keyword id="KW-0067">ATP-binding</keyword>
<keyword id="KW-1003">Cell membrane</keyword>
<keyword id="KW-1015">Disulfide bond</keyword>
<keyword id="KW-0245">EGF-like domain</keyword>
<keyword id="KW-0325">Glycoprotein</keyword>
<keyword id="KW-0418">Kinase</keyword>
<keyword id="KW-0430">Lectin</keyword>
<keyword id="KW-0472">Membrane</keyword>
<keyword id="KW-0547">Nucleotide-binding</keyword>
<keyword id="KW-0675">Receptor</keyword>
<keyword id="KW-1185">Reference proteome</keyword>
<keyword id="KW-0723">Serine/threonine-protein kinase</keyword>
<keyword id="KW-0732">Signal</keyword>
<keyword id="KW-0808">Transferase</keyword>
<keyword id="KW-0812">Transmembrane</keyword>
<keyword id="KW-1133">Transmembrane helix</keyword>